<proteinExistence type="inferred from homology"/>
<protein>
    <recommendedName>
        <fullName evidence="1">Chorismate synthase</fullName>
        <shortName evidence="1">CS</shortName>
        <ecNumber evidence="1">4.2.3.5</ecNumber>
    </recommendedName>
    <alternativeName>
        <fullName evidence="1">5-enolpyruvylshikimate-3-phosphate phospholyase</fullName>
    </alternativeName>
</protein>
<organism>
    <name type="scientific">Listeria monocytogenes serovar 1/2a (strain ATCC BAA-679 / EGD-e)</name>
    <dbReference type="NCBI Taxonomy" id="169963"/>
    <lineage>
        <taxon>Bacteria</taxon>
        <taxon>Bacillati</taxon>
        <taxon>Bacillota</taxon>
        <taxon>Bacilli</taxon>
        <taxon>Bacillales</taxon>
        <taxon>Listeriaceae</taxon>
        <taxon>Listeria</taxon>
    </lineage>
</organism>
<accession>Q8Y5X5</accession>
<dbReference type="EC" id="4.2.3.5" evidence="1"/>
<dbReference type="EMBL" id="AL591981">
    <property type="protein sequence ID" value="CAD00006.1"/>
    <property type="molecule type" value="Genomic_DNA"/>
</dbReference>
<dbReference type="PIR" id="AH1315">
    <property type="entry name" value="AH1315"/>
</dbReference>
<dbReference type="RefSeq" id="NP_465452.1">
    <property type="nucleotide sequence ID" value="NC_003210.1"/>
</dbReference>
<dbReference type="RefSeq" id="WP_003723911.1">
    <property type="nucleotide sequence ID" value="NZ_CP149495.1"/>
</dbReference>
<dbReference type="SMR" id="Q8Y5X5"/>
<dbReference type="STRING" id="169963.gene:17594613"/>
<dbReference type="PaxDb" id="169963-lmo1928"/>
<dbReference type="EnsemblBacteria" id="CAD00006">
    <property type="protein sequence ID" value="CAD00006"/>
    <property type="gene ID" value="CAD00006"/>
</dbReference>
<dbReference type="GeneID" id="985751"/>
<dbReference type="KEGG" id="lmo:lmo1928"/>
<dbReference type="PATRIC" id="fig|169963.11.peg.1974"/>
<dbReference type="eggNOG" id="COG0082">
    <property type="taxonomic scope" value="Bacteria"/>
</dbReference>
<dbReference type="HOGENOM" id="CLU_034547_2_0_9"/>
<dbReference type="OrthoDB" id="9771806at2"/>
<dbReference type="PhylomeDB" id="Q8Y5X5"/>
<dbReference type="BioCyc" id="LMON169963:LMO1928-MONOMER"/>
<dbReference type="UniPathway" id="UPA00053">
    <property type="reaction ID" value="UER00090"/>
</dbReference>
<dbReference type="Proteomes" id="UP000000817">
    <property type="component" value="Chromosome"/>
</dbReference>
<dbReference type="GO" id="GO:0005829">
    <property type="term" value="C:cytosol"/>
    <property type="evidence" value="ECO:0000318"/>
    <property type="project" value="GO_Central"/>
</dbReference>
<dbReference type="GO" id="GO:0004107">
    <property type="term" value="F:chorismate synthase activity"/>
    <property type="evidence" value="ECO:0000318"/>
    <property type="project" value="GO_Central"/>
</dbReference>
<dbReference type="GO" id="GO:0010181">
    <property type="term" value="F:FMN binding"/>
    <property type="evidence" value="ECO:0000318"/>
    <property type="project" value="GO_Central"/>
</dbReference>
<dbReference type="GO" id="GO:0008652">
    <property type="term" value="P:amino acid biosynthetic process"/>
    <property type="evidence" value="ECO:0007669"/>
    <property type="project" value="UniProtKB-KW"/>
</dbReference>
<dbReference type="GO" id="GO:0009073">
    <property type="term" value="P:aromatic amino acid family biosynthetic process"/>
    <property type="evidence" value="ECO:0000318"/>
    <property type="project" value="GO_Central"/>
</dbReference>
<dbReference type="GO" id="GO:0009423">
    <property type="term" value="P:chorismate biosynthetic process"/>
    <property type="evidence" value="ECO:0000318"/>
    <property type="project" value="GO_Central"/>
</dbReference>
<dbReference type="CDD" id="cd07304">
    <property type="entry name" value="Chorismate_synthase"/>
    <property type="match status" value="1"/>
</dbReference>
<dbReference type="FunFam" id="3.60.150.10:FF:000002">
    <property type="entry name" value="Chorismate synthase"/>
    <property type="match status" value="1"/>
</dbReference>
<dbReference type="Gene3D" id="3.60.150.10">
    <property type="entry name" value="Chorismate synthase AroC"/>
    <property type="match status" value="1"/>
</dbReference>
<dbReference type="HAMAP" id="MF_00300">
    <property type="entry name" value="Chorismate_synth"/>
    <property type="match status" value="1"/>
</dbReference>
<dbReference type="InterPro" id="IPR000453">
    <property type="entry name" value="Chorismate_synth"/>
</dbReference>
<dbReference type="InterPro" id="IPR035904">
    <property type="entry name" value="Chorismate_synth_AroC_sf"/>
</dbReference>
<dbReference type="InterPro" id="IPR020541">
    <property type="entry name" value="Chorismate_synthase_CS"/>
</dbReference>
<dbReference type="NCBIfam" id="TIGR00033">
    <property type="entry name" value="aroC"/>
    <property type="match status" value="1"/>
</dbReference>
<dbReference type="NCBIfam" id="NF003793">
    <property type="entry name" value="PRK05382.1"/>
    <property type="match status" value="1"/>
</dbReference>
<dbReference type="PANTHER" id="PTHR21085">
    <property type="entry name" value="CHORISMATE SYNTHASE"/>
    <property type="match status" value="1"/>
</dbReference>
<dbReference type="PANTHER" id="PTHR21085:SF0">
    <property type="entry name" value="CHORISMATE SYNTHASE"/>
    <property type="match status" value="1"/>
</dbReference>
<dbReference type="Pfam" id="PF01264">
    <property type="entry name" value="Chorismate_synt"/>
    <property type="match status" value="1"/>
</dbReference>
<dbReference type="PIRSF" id="PIRSF001456">
    <property type="entry name" value="Chorismate_synth"/>
    <property type="match status" value="1"/>
</dbReference>
<dbReference type="SUPFAM" id="SSF103263">
    <property type="entry name" value="Chorismate synthase, AroC"/>
    <property type="match status" value="1"/>
</dbReference>
<dbReference type="PROSITE" id="PS00787">
    <property type="entry name" value="CHORISMATE_SYNTHASE_1"/>
    <property type="match status" value="1"/>
</dbReference>
<dbReference type="PROSITE" id="PS00788">
    <property type="entry name" value="CHORISMATE_SYNTHASE_2"/>
    <property type="match status" value="1"/>
</dbReference>
<dbReference type="PROSITE" id="PS00789">
    <property type="entry name" value="CHORISMATE_SYNTHASE_3"/>
    <property type="match status" value="1"/>
</dbReference>
<keyword id="KW-0028">Amino-acid biosynthesis</keyword>
<keyword id="KW-0057">Aromatic amino acid biosynthesis</keyword>
<keyword id="KW-0274">FAD</keyword>
<keyword id="KW-0285">Flavoprotein</keyword>
<keyword id="KW-0288">FMN</keyword>
<keyword id="KW-0456">Lyase</keyword>
<keyword id="KW-0521">NADP</keyword>
<keyword id="KW-1185">Reference proteome</keyword>
<feature type="chain" id="PRO_0000140608" description="Chorismate synthase">
    <location>
        <begin position="1"/>
        <end position="388"/>
    </location>
</feature>
<feature type="region of interest" description="Disordered" evidence="2">
    <location>
        <begin position="95"/>
        <end position="118"/>
    </location>
</feature>
<feature type="binding site" evidence="1">
    <location>
        <position position="39"/>
    </location>
    <ligand>
        <name>NADP(+)</name>
        <dbReference type="ChEBI" id="CHEBI:58349"/>
    </ligand>
</feature>
<feature type="binding site" evidence="1">
    <location>
        <position position="45"/>
    </location>
    <ligand>
        <name>NADP(+)</name>
        <dbReference type="ChEBI" id="CHEBI:58349"/>
    </ligand>
</feature>
<feature type="binding site" evidence="1">
    <location>
        <begin position="130"/>
        <end position="132"/>
    </location>
    <ligand>
        <name>FMN</name>
        <dbReference type="ChEBI" id="CHEBI:58210"/>
    </ligand>
</feature>
<feature type="binding site" evidence="1">
    <location>
        <begin position="251"/>
        <end position="252"/>
    </location>
    <ligand>
        <name>FMN</name>
        <dbReference type="ChEBI" id="CHEBI:58210"/>
    </ligand>
</feature>
<feature type="binding site" evidence="1">
    <location>
        <position position="296"/>
    </location>
    <ligand>
        <name>FMN</name>
        <dbReference type="ChEBI" id="CHEBI:58210"/>
    </ligand>
</feature>
<feature type="binding site" evidence="1">
    <location>
        <begin position="311"/>
        <end position="315"/>
    </location>
    <ligand>
        <name>FMN</name>
        <dbReference type="ChEBI" id="CHEBI:58210"/>
    </ligand>
</feature>
<feature type="binding site" evidence="1">
    <location>
        <position position="337"/>
    </location>
    <ligand>
        <name>FMN</name>
        <dbReference type="ChEBI" id="CHEBI:58210"/>
    </ligand>
</feature>
<comment type="function">
    <text evidence="1">Catalyzes the anti-1,4-elimination of the C-3 phosphate and the C-6 proR hydrogen from 5-enolpyruvylshikimate-3-phosphate (EPSP) to yield chorismate, which is the branch point compound that serves as the starting substrate for the three terminal pathways of aromatic amino acid biosynthesis. This reaction introduces a second double bond into the aromatic ring system.</text>
</comment>
<comment type="catalytic activity">
    <reaction evidence="1">
        <text>5-O-(1-carboxyvinyl)-3-phosphoshikimate = chorismate + phosphate</text>
        <dbReference type="Rhea" id="RHEA:21020"/>
        <dbReference type="ChEBI" id="CHEBI:29748"/>
        <dbReference type="ChEBI" id="CHEBI:43474"/>
        <dbReference type="ChEBI" id="CHEBI:57701"/>
        <dbReference type="EC" id="4.2.3.5"/>
    </reaction>
</comment>
<comment type="cofactor">
    <cofactor evidence="1">
        <name>FMNH2</name>
        <dbReference type="ChEBI" id="CHEBI:57618"/>
    </cofactor>
    <text evidence="1">Reduced FMN (FMNH(2)).</text>
</comment>
<comment type="pathway">
    <text evidence="1">Metabolic intermediate biosynthesis; chorismate biosynthesis; chorismate from D-erythrose 4-phosphate and phosphoenolpyruvate: step 7/7.</text>
</comment>
<comment type="subunit">
    <text evidence="1">Homotetramer.</text>
</comment>
<comment type="similarity">
    <text evidence="1">Belongs to the chorismate synthase family.</text>
</comment>
<sequence>MRYLTAGESHGPGLTTIIEGLPAGMPLLAEDVNKELKRRQGGHGRGARMRIEKDQVQITAGIRHGKTLGAPVAMFVENKDWKHWETVMSIEPVPEKNEKSRRVSRPRPGHADLVGGMKYGHNDMRNVLERSSARETTVRVAAGAVAKKLLHELGIEVAGHVLEIGGTRANLTRDYAVAEIQETSEASPVRCLDGVAAEEMMQKIDDAKKNGDTIGGIVEVVVGGVPAGLGSYVQWDKKLDAKIARAIVSINAFKGAEFGVGFEAARKPGSEVMDEILWSKEDGYTRRTNNLGGFEGGMTNGMPIVVRGVMKPIPTLYKPLQSVDIDSKETFNASVERSDSCAVPAASVVAEAVVAWEVAVAVLEKFDGDRFDTLKKHVEEHRNLTKEF</sequence>
<name>AROC_LISMO</name>
<gene>
    <name evidence="1" type="primary">aroC</name>
    <name type="synonym">aroF</name>
    <name type="ordered locus">lmo1928</name>
</gene>
<evidence type="ECO:0000255" key="1">
    <source>
        <dbReference type="HAMAP-Rule" id="MF_00300"/>
    </source>
</evidence>
<evidence type="ECO:0000256" key="2">
    <source>
        <dbReference type="SAM" id="MobiDB-lite"/>
    </source>
</evidence>
<reference key="1">
    <citation type="journal article" date="2001" name="Science">
        <title>Comparative genomics of Listeria species.</title>
        <authorList>
            <person name="Glaser P."/>
            <person name="Frangeul L."/>
            <person name="Buchrieser C."/>
            <person name="Rusniok C."/>
            <person name="Amend A."/>
            <person name="Baquero F."/>
            <person name="Berche P."/>
            <person name="Bloecker H."/>
            <person name="Brandt P."/>
            <person name="Chakraborty T."/>
            <person name="Charbit A."/>
            <person name="Chetouani F."/>
            <person name="Couve E."/>
            <person name="de Daruvar A."/>
            <person name="Dehoux P."/>
            <person name="Domann E."/>
            <person name="Dominguez-Bernal G."/>
            <person name="Duchaud E."/>
            <person name="Durant L."/>
            <person name="Dussurget O."/>
            <person name="Entian K.-D."/>
            <person name="Fsihi H."/>
            <person name="Garcia-del Portillo F."/>
            <person name="Garrido P."/>
            <person name="Gautier L."/>
            <person name="Goebel W."/>
            <person name="Gomez-Lopez N."/>
            <person name="Hain T."/>
            <person name="Hauf J."/>
            <person name="Jackson D."/>
            <person name="Jones L.-M."/>
            <person name="Kaerst U."/>
            <person name="Kreft J."/>
            <person name="Kuhn M."/>
            <person name="Kunst F."/>
            <person name="Kurapkat G."/>
            <person name="Madueno E."/>
            <person name="Maitournam A."/>
            <person name="Mata Vicente J."/>
            <person name="Ng E."/>
            <person name="Nedjari H."/>
            <person name="Nordsiek G."/>
            <person name="Novella S."/>
            <person name="de Pablos B."/>
            <person name="Perez-Diaz J.-C."/>
            <person name="Purcell R."/>
            <person name="Remmel B."/>
            <person name="Rose M."/>
            <person name="Schlueter T."/>
            <person name="Simoes N."/>
            <person name="Tierrez A."/>
            <person name="Vazquez-Boland J.-A."/>
            <person name="Voss H."/>
            <person name="Wehland J."/>
            <person name="Cossart P."/>
        </authorList>
    </citation>
    <scope>NUCLEOTIDE SEQUENCE [LARGE SCALE GENOMIC DNA]</scope>
    <source>
        <strain>ATCC BAA-679 / EGD-e</strain>
    </source>
</reference>